<name>YCF4_TOBAC</name>
<keyword id="KW-0150">Chloroplast</keyword>
<keyword id="KW-0472">Membrane</keyword>
<keyword id="KW-0602">Photosynthesis</keyword>
<keyword id="KW-0934">Plastid</keyword>
<keyword id="KW-1185">Reference proteome</keyword>
<keyword id="KW-0793">Thylakoid</keyword>
<keyword id="KW-0812">Transmembrane</keyword>
<keyword id="KW-1133">Transmembrane helix</keyword>
<gene>
    <name evidence="1" type="primary">ycf4</name>
</gene>
<comment type="function">
    <text evidence="1">Seems to be required for the assembly of the photosystem I complex.</text>
</comment>
<comment type="subcellular location">
    <subcellularLocation>
        <location evidence="1">Plastid</location>
        <location evidence="1">Chloroplast thylakoid membrane</location>
        <topology evidence="1">Multi-pass membrane protein</topology>
    </subcellularLocation>
</comment>
<comment type="similarity">
    <text evidence="1">Belongs to the Ycf4 family.</text>
</comment>
<feature type="chain" id="PRO_0000217630" description="Photosystem I assembly protein Ycf4">
    <location>
        <begin position="1"/>
        <end position="184"/>
    </location>
</feature>
<feature type="transmembrane region" description="Helical" evidence="1">
    <location>
        <begin position="21"/>
        <end position="43"/>
    </location>
</feature>
<feature type="transmembrane region" description="Helical" evidence="1">
    <location>
        <begin position="58"/>
        <end position="80"/>
    </location>
</feature>
<dbReference type="EMBL" id="Z00044">
    <property type="protein sequence ID" value="CAA77363.1"/>
    <property type="molecule type" value="Genomic_DNA"/>
</dbReference>
<dbReference type="PIR" id="A05197">
    <property type="entry name" value="A05197"/>
</dbReference>
<dbReference type="RefSeq" id="NP_054510.1">
    <property type="nucleotide sequence ID" value="NC_001879.2"/>
</dbReference>
<dbReference type="GeneID" id="1466297"/>
<dbReference type="KEGG" id="nta:1466297"/>
<dbReference type="OMA" id="RFSNYWW"/>
<dbReference type="OrthoDB" id="1287926at2759"/>
<dbReference type="Proteomes" id="UP000084051">
    <property type="component" value="Unplaced"/>
</dbReference>
<dbReference type="GO" id="GO:0009535">
    <property type="term" value="C:chloroplast thylakoid membrane"/>
    <property type="evidence" value="ECO:0007669"/>
    <property type="project" value="UniProtKB-SubCell"/>
</dbReference>
<dbReference type="GO" id="GO:0009522">
    <property type="term" value="C:photosystem I"/>
    <property type="evidence" value="ECO:0007669"/>
    <property type="project" value="InterPro"/>
</dbReference>
<dbReference type="GO" id="GO:0015979">
    <property type="term" value="P:photosynthesis"/>
    <property type="evidence" value="ECO:0007669"/>
    <property type="project" value="UniProtKB-UniRule"/>
</dbReference>
<dbReference type="HAMAP" id="MF_00437">
    <property type="entry name" value="Ycf4"/>
    <property type="match status" value="1"/>
</dbReference>
<dbReference type="InterPro" id="IPR003359">
    <property type="entry name" value="PSI_Ycf4_assembly"/>
</dbReference>
<dbReference type="NCBIfam" id="NF002712">
    <property type="entry name" value="PRK02542.1"/>
    <property type="match status" value="1"/>
</dbReference>
<dbReference type="PANTHER" id="PTHR33288">
    <property type="match status" value="1"/>
</dbReference>
<dbReference type="PANTHER" id="PTHR33288:SF4">
    <property type="entry name" value="PHOTOSYSTEM I ASSEMBLY PROTEIN YCF4"/>
    <property type="match status" value="1"/>
</dbReference>
<dbReference type="Pfam" id="PF02392">
    <property type="entry name" value="Ycf4"/>
    <property type="match status" value="1"/>
</dbReference>
<accession>P12207</accession>
<sequence>MTWRSEHIWIELITGSRKISNFCWAFILFLGSLGFLLVGTSSYLGRNLISFFPPQQIIFFPQGLVMSFYGIAGLFISSYLWCTISWNVGSGYDRFDRKEGIVCIFRWGFPGKNRRIFLRFLIKDIQSVRIEVKEGISARRVLYMDIRGQGSIPLTRTDENLTPREIEQKAAELAYFLRVPIEVF</sequence>
<evidence type="ECO:0000255" key="1">
    <source>
        <dbReference type="HAMAP-Rule" id="MF_00437"/>
    </source>
</evidence>
<organism>
    <name type="scientific">Nicotiana tabacum</name>
    <name type="common">Common tobacco</name>
    <dbReference type="NCBI Taxonomy" id="4097"/>
    <lineage>
        <taxon>Eukaryota</taxon>
        <taxon>Viridiplantae</taxon>
        <taxon>Streptophyta</taxon>
        <taxon>Embryophyta</taxon>
        <taxon>Tracheophyta</taxon>
        <taxon>Spermatophyta</taxon>
        <taxon>Magnoliopsida</taxon>
        <taxon>eudicotyledons</taxon>
        <taxon>Gunneridae</taxon>
        <taxon>Pentapetalae</taxon>
        <taxon>asterids</taxon>
        <taxon>lamiids</taxon>
        <taxon>Solanales</taxon>
        <taxon>Solanaceae</taxon>
        <taxon>Nicotianoideae</taxon>
        <taxon>Nicotianeae</taxon>
        <taxon>Nicotiana</taxon>
    </lineage>
</organism>
<reference key="1">
    <citation type="journal article" date="1986" name="EMBO J.">
        <title>The complete nucleotide sequence of the tobacco chloroplast genome: its gene organization and expression.</title>
        <authorList>
            <person name="Shinozaki K."/>
            <person name="Ohme M."/>
            <person name="Tanaka M."/>
            <person name="Wakasugi T."/>
            <person name="Hayashida N."/>
            <person name="Matsubayashi T."/>
            <person name="Zaita N."/>
            <person name="Chunwongse J."/>
            <person name="Obokata J."/>
            <person name="Yamaguchi-Shinozaki K."/>
            <person name="Ohto C."/>
            <person name="Torazawa K."/>
            <person name="Meng B.-Y."/>
            <person name="Sugita M."/>
            <person name="Deno H."/>
            <person name="Kamogashira T."/>
            <person name="Yamada K."/>
            <person name="Kusuda J."/>
            <person name="Takaiwa F."/>
            <person name="Kato A."/>
            <person name="Tohdoh N."/>
            <person name="Shimada H."/>
            <person name="Sugiura M."/>
        </authorList>
    </citation>
    <scope>NUCLEOTIDE SEQUENCE [LARGE SCALE GENOMIC DNA]</scope>
    <source>
        <strain>cv. Bright Yellow 4</strain>
    </source>
</reference>
<geneLocation type="chloroplast"/>
<proteinExistence type="inferred from homology"/>
<protein>
    <recommendedName>
        <fullName evidence="1">Photosystem I assembly protein Ycf4</fullName>
    </recommendedName>
</protein>